<sequence length="223" mass="25244">MALVRGGWLWRQSSILRRWKRNWFALWLDGTLGYYHDETAQDEEDRVVIHFNVRDIKVGQECQDVQPPEGRSRDGLLTVNLREGSRLHLCAETRDDAIAWKTALMEANSTPAPAGATVPPRSRRVCPKVRCTSLSWKPCKVERRIWVRVYSPYQDYYEVVPPNAHEATYVRSYYGPPYGPGVTHVIVREDPCYSSGAPLAMGMLAGAATGAALGSLMWSPCWF</sequence>
<comment type="subunit">
    <text evidence="1 2">Homodimer. Interacts (via PH domain) with MYO1C. Interacts (via PH domain) with MYO7A (By similarity). Binds transducins (By similarity).</text>
</comment>
<comment type="subcellular location">
    <subcellularLocation>
        <location evidence="4">Membrane</location>
    </subcellularLocation>
    <subcellularLocation>
        <location evidence="1">Cytoplasm</location>
    </subcellularLocation>
    <text evidence="1 2">Localizes to the apical juxta-nuclear Golgi region of the cytoplasm (By similarity). Membrane-associated. Highly expressed in the outer segments of photoreceptor cells, both in rods and cones (By similarity).</text>
</comment>
<comment type="tissue specificity">
    <text evidence="4 5">Highly expressed in photoreceptor cells, oligodendrocytes and throughout the myelinated parts of the central nervous system. Detected in brain, liver, kidney, spleen and trachea.</text>
</comment>
<name>PKHB1_RAT</name>
<dbReference type="EMBL" id="AF118562">
    <property type="protein sequence ID" value="AAD23762.1"/>
    <property type="molecule type" value="mRNA"/>
</dbReference>
<dbReference type="EMBL" id="AF081582">
    <property type="protein sequence ID" value="AAF21785.1"/>
    <property type="molecule type" value="mRNA"/>
</dbReference>
<dbReference type="RefSeq" id="NP_742030.1">
    <property type="nucleotide sequence ID" value="NM_172033.2"/>
</dbReference>
<dbReference type="SMR" id="Q9WU68"/>
<dbReference type="FunCoup" id="Q9WU68">
    <property type="interactions" value="743"/>
</dbReference>
<dbReference type="STRING" id="10116.ENSRNOP00000025245"/>
<dbReference type="iPTMnet" id="Q9WU68"/>
<dbReference type="PhosphoSitePlus" id="Q9WU68"/>
<dbReference type="PaxDb" id="10116-ENSRNOP00000025245"/>
<dbReference type="Ensembl" id="ENSRNOT00000025245.6">
    <property type="protein sequence ID" value="ENSRNOP00000025245.3"/>
    <property type="gene ID" value="ENSRNOG00000018627.8"/>
</dbReference>
<dbReference type="GeneID" id="64471"/>
<dbReference type="KEGG" id="rno:64471"/>
<dbReference type="UCSC" id="RGD:621614">
    <property type="organism name" value="rat"/>
</dbReference>
<dbReference type="AGR" id="RGD:621614"/>
<dbReference type="CTD" id="58473"/>
<dbReference type="RGD" id="621614">
    <property type="gene designation" value="Plekhb1"/>
</dbReference>
<dbReference type="eggNOG" id="ENOG502RQ6P">
    <property type="taxonomic scope" value="Eukaryota"/>
</dbReference>
<dbReference type="GeneTree" id="ENSGT00390000013989"/>
<dbReference type="HOGENOM" id="CLU_102020_0_0_1"/>
<dbReference type="InParanoid" id="Q9WU68"/>
<dbReference type="OMA" id="HFNVRDV"/>
<dbReference type="PhylomeDB" id="Q9WU68"/>
<dbReference type="PRO" id="PR:Q9WU68"/>
<dbReference type="Proteomes" id="UP000002494">
    <property type="component" value="Chromosome 1"/>
</dbReference>
<dbReference type="Bgee" id="ENSRNOG00000018627">
    <property type="expression patterns" value="Expressed in Ammon's horn and 19 other cell types or tissues"/>
</dbReference>
<dbReference type="ExpressionAtlas" id="Q9WU68">
    <property type="expression patterns" value="baseline and differential"/>
</dbReference>
<dbReference type="GO" id="GO:0005737">
    <property type="term" value="C:cytoplasm"/>
    <property type="evidence" value="ECO:0007669"/>
    <property type="project" value="UniProtKB-SubCell"/>
</dbReference>
<dbReference type="GO" id="GO:0016020">
    <property type="term" value="C:membrane"/>
    <property type="evidence" value="ECO:0000266"/>
    <property type="project" value="RGD"/>
</dbReference>
<dbReference type="GO" id="GO:0045595">
    <property type="term" value="P:regulation of cell differentiation"/>
    <property type="evidence" value="ECO:0000270"/>
    <property type="project" value="RGD"/>
</dbReference>
<dbReference type="CDD" id="cd13265">
    <property type="entry name" value="PH_evt"/>
    <property type="match status" value="1"/>
</dbReference>
<dbReference type="FunFam" id="2.30.29.30:FF:000073">
    <property type="entry name" value="Pleckstrin homology domain-containing family B member 2"/>
    <property type="match status" value="1"/>
</dbReference>
<dbReference type="Gene3D" id="2.30.29.30">
    <property type="entry name" value="Pleckstrin-homology domain (PH domain)/Phosphotyrosine-binding domain (PTB)"/>
    <property type="match status" value="1"/>
</dbReference>
<dbReference type="InterPro" id="IPR011993">
    <property type="entry name" value="PH-like_dom_sf"/>
</dbReference>
<dbReference type="InterPro" id="IPR001849">
    <property type="entry name" value="PH_domain"/>
</dbReference>
<dbReference type="InterPro" id="IPR039680">
    <property type="entry name" value="PLEKHB1/2"/>
</dbReference>
<dbReference type="PANTHER" id="PTHR14309">
    <property type="entry name" value="EXPRESSED PROTEIN"/>
    <property type="match status" value="1"/>
</dbReference>
<dbReference type="PANTHER" id="PTHR14309:SF7">
    <property type="entry name" value="PLECKSTRIN HOMOLOGY DOMAIN-CONTAINING FAMILY B MEMBER 1"/>
    <property type="match status" value="1"/>
</dbReference>
<dbReference type="Pfam" id="PF00169">
    <property type="entry name" value="PH"/>
    <property type="match status" value="1"/>
</dbReference>
<dbReference type="SMART" id="SM00233">
    <property type="entry name" value="PH"/>
    <property type="match status" value="1"/>
</dbReference>
<dbReference type="SUPFAM" id="SSF50729">
    <property type="entry name" value="PH domain-like"/>
    <property type="match status" value="1"/>
</dbReference>
<dbReference type="PROSITE" id="PS50003">
    <property type="entry name" value="PH_DOMAIN"/>
    <property type="match status" value="1"/>
</dbReference>
<proteinExistence type="evidence at transcript level"/>
<accession>Q9WU68</accession>
<feature type="chain" id="PRO_0000053888" description="Pleckstrin homology domain-containing family B member 1">
    <location>
        <begin position="1"/>
        <end position="223"/>
    </location>
</feature>
<feature type="domain" description="PH" evidence="3">
    <location>
        <begin position="2"/>
        <end position="109"/>
    </location>
</feature>
<evidence type="ECO:0000250" key="1">
    <source>
        <dbReference type="UniProtKB" id="Q9QYE9"/>
    </source>
</evidence>
<evidence type="ECO:0000250" key="2">
    <source>
        <dbReference type="UniProtKB" id="Q9UF11"/>
    </source>
</evidence>
<evidence type="ECO:0000255" key="3">
    <source>
        <dbReference type="PROSITE-ProRule" id="PRU00145"/>
    </source>
</evidence>
<evidence type="ECO:0000269" key="4">
    <source>
    </source>
</evidence>
<evidence type="ECO:0000269" key="5">
    <source>
    </source>
</evidence>
<keyword id="KW-0963">Cytoplasm</keyword>
<keyword id="KW-0217">Developmental protein</keyword>
<keyword id="KW-0472">Membrane</keyword>
<keyword id="KW-1185">Reference proteome</keyword>
<organism>
    <name type="scientific">Rattus norvegicus</name>
    <name type="common">Rat</name>
    <dbReference type="NCBI Taxonomy" id="10116"/>
    <lineage>
        <taxon>Eukaryota</taxon>
        <taxon>Metazoa</taxon>
        <taxon>Chordata</taxon>
        <taxon>Craniata</taxon>
        <taxon>Vertebrata</taxon>
        <taxon>Euteleostomi</taxon>
        <taxon>Mammalia</taxon>
        <taxon>Eutheria</taxon>
        <taxon>Euarchontoglires</taxon>
        <taxon>Glires</taxon>
        <taxon>Rodentia</taxon>
        <taxon>Myomorpha</taxon>
        <taxon>Muroidea</taxon>
        <taxon>Muridae</taxon>
        <taxon>Murinae</taxon>
        <taxon>Rattus</taxon>
    </lineage>
</organism>
<gene>
    <name type="primary">Plekhb1</name>
    <name type="synonym">Evt1</name>
    <name type="synonym">Kpl1</name>
</gene>
<reference key="1">
    <citation type="journal article" date="1999" name="Proc. Natl. Acad. Sci. U.S.A.">
        <title>Evectins: vesicular proteins that carry a pleckstrin homology domain and localize to post-Golgi membranes.</title>
        <authorList>
            <person name="Krappa R."/>
            <person name="Nguyen A."/>
            <person name="Burrola P."/>
            <person name="Deretic D."/>
            <person name="Lemke G."/>
        </authorList>
    </citation>
    <scope>NUCLEOTIDE SEQUENCE [MRNA]</scope>
    <scope>TISSUE SPECIFICITY</scope>
    <scope>SUBCELLULAR LOCATION</scope>
    <source>
        <tissue>Schwann cell</tissue>
    </source>
</reference>
<reference key="2">
    <citation type="journal article" date="2000" name="Exp. Lung Res.">
        <title>KPL1, which encodes a novel PH domain-containing protein, is induced during ciliated cell differentiation of rat tracheal epithelial cells.</title>
        <authorList>
            <person name="Andrews K.L."/>
            <person name="Potdar P.D."/>
            <person name="Nettesheim P."/>
            <person name="Ostrowski L.E."/>
        </authorList>
    </citation>
    <scope>NUCLEOTIDE SEQUENCE [MRNA]</scope>
    <scope>TISSUE SPECIFICITY</scope>
    <source>
        <tissue>Tracheal epithelium</tissue>
    </source>
</reference>
<protein>
    <recommendedName>
        <fullName>Pleckstrin homology domain-containing family B member 1</fullName>
        <shortName>PH domain-containing family B member 1</shortName>
    </recommendedName>
    <alternativeName>
        <fullName>Evectin-1</fullName>
    </alternativeName>
</protein>